<dbReference type="EMBL" id="BA000022">
    <property type="protein sequence ID" value="BAA16951.1"/>
    <property type="molecule type" value="Genomic_DNA"/>
</dbReference>
<dbReference type="PIR" id="S74800">
    <property type="entry name" value="S74800"/>
</dbReference>
<dbReference type="SMR" id="P72934"/>
<dbReference type="FunCoup" id="P72934">
    <property type="interactions" value="281"/>
</dbReference>
<dbReference type="STRING" id="1148.gene:10497811"/>
<dbReference type="PaxDb" id="1148-1652025"/>
<dbReference type="EnsemblBacteria" id="BAA16951">
    <property type="protein sequence ID" value="BAA16951"/>
    <property type="gene ID" value="BAA16951"/>
</dbReference>
<dbReference type="KEGG" id="syn:sll1018"/>
<dbReference type="eggNOG" id="COG0044">
    <property type="taxonomic scope" value="Bacteria"/>
</dbReference>
<dbReference type="InParanoid" id="P72934"/>
<dbReference type="PhylomeDB" id="P72934"/>
<dbReference type="Proteomes" id="UP000001425">
    <property type="component" value="Chromosome"/>
</dbReference>
<dbReference type="GO" id="GO:0005737">
    <property type="term" value="C:cytoplasm"/>
    <property type="evidence" value="ECO:0000318"/>
    <property type="project" value="GO_Central"/>
</dbReference>
<dbReference type="GO" id="GO:0004038">
    <property type="term" value="F:allantoinase activity"/>
    <property type="evidence" value="ECO:0000318"/>
    <property type="project" value="GO_Central"/>
</dbReference>
<dbReference type="GO" id="GO:0004151">
    <property type="term" value="F:dihydroorotase activity"/>
    <property type="evidence" value="ECO:0007669"/>
    <property type="project" value="InterPro"/>
</dbReference>
<dbReference type="GO" id="GO:0046872">
    <property type="term" value="F:metal ion binding"/>
    <property type="evidence" value="ECO:0007669"/>
    <property type="project" value="InterPro"/>
</dbReference>
<dbReference type="GO" id="GO:0006145">
    <property type="term" value="P:purine nucleobase catabolic process"/>
    <property type="evidence" value="ECO:0000318"/>
    <property type="project" value="GO_Central"/>
</dbReference>
<dbReference type="GO" id="GO:0006221">
    <property type="term" value="P:pyrimidine nucleotide biosynthetic process"/>
    <property type="evidence" value="ECO:0007669"/>
    <property type="project" value="UniProtKB-KW"/>
</dbReference>
<dbReference type="CDD" id="cd01317">
    <property type="entry name" value="DHOase_IIa"/>
    <property type="match status" value="1"/>
</dbReference>
<dbReference type="Gene3D" id="3.20.20.140">
    <property type="entry name" value="Metal-dependent hydrolases"/>
    <property type="match status" value="1"/>
</dbReference>
<dbReference type="InterPro" id="IPR004722">
    <property type="entry name" value="DHOase"/>
</dbReference>
<dbReference type="InterPro" id="IPR050138">
    <property type="entry name" value="DHOase/Allantoinase_Hydrolase"/>
</dbReference>
<dbReference type="InterPro" id="IPR011059">
    <property type="entry name" value="Metal-dep_hydrolase_composite"/>
</dbReference>
<dbReference type="InterPro" id="IPR032466">
    <property type="entry name" value="Metal_Hydrolase"/>
</dbReference>
<dbReference type="NCBIfam" id="NF005614">
    <property type="entry name" value="PRK07369.1"/>
    <property type="match status" value="1"/>
</dbReference>
<dbReference type="NCBIfam" id="TIGR00857">
    <property type="entry name" value="pyrC_multi"/>
    <property type="match status" value="1"/>
</dbReference>
<dbReference type="PANTHER" id="PTHR43668">
    <property type="entry name" value="ALLANTOINASE"/>
    <property type="match status" value="1"/>
</dbReference>
<dbReference type="PANTHER" id="PTHR43668:SF2">
    <property type="entry name" value="ALLANTOINASE"/>
    <property type="match status" value="1"/>
</dbReference>
<dbReference type="SUPFAM" id="SSF51338">
    <property type="entry name" value="Composite domain of metallo-dependent hydrolases"/>
    <property type="match status" value="1"/>
</dbReference>
<dbReference type="SUPFAM" id="SSF51556">
    <property type="entry name" value="Metallo-dependent hydrolases"/>
    <property type="match status" value="1"/>
</dbReference>
<evidence type="ECO:0000250" key="1">
    <source>
        <dbReference type="UniProtKB" id="Q59712"/>
    </source>
</evidence>
<evidence type="ECO:0000256" key="2">
    <source>
        <dbReference type="SAM" id="MobiDB-lite"/>
    </source>
</evidence>
<evidence type="ECO:0000305" key="3"/>
<keyword id="KW-0665">Pyrimidine biosynthesis</keyword>
<keyword id="KW-1185">Reference proteome</keyword>
<organism>
    <name type="scientific">Synechocystis sp. (strain ATCC 27184 / PCC 6803 / Kazusa)</name>
    <dbReference type="NCBI Taxonomy" id="1111708"/>
    <lineage>
        <taxon>Bacteria</taxon>
        <taxon>Bacillati</taxon>
        <taxon>Cyanobacteriota</taxon>
        <taxon>Cyanophyceae</taxon>
        <taxon>Synechococcales</taxon>
        <taxon>Merismopediaceae</taxon>
        <taxon>Synechocystis</taxon>
    </lineage>
</organism>
<gene>
    <name type="primary">pyrC'</name>
    <name type="ordered locus">sll1018</name>
</gene>
<reference key="1">
    <citation type="journal article" date="1996" name="DNA Res.">
        <title>Sequence analysis of the genome of the unicellular cyanobacterium Synechocystis sp. strain PCC6803. II. Sequence determination of the entire genome and assignment of potential protein-coding regions.</title>
        <authorList>
            <person name="Kaneko T."/>
            <person name="Sato S."/>
            <person name="Kotani H."/>
            <person name="Tanaka A."/>
            <person name="Asamizu E."/>
            <person name="Nakamura Y."/>
            <person name="Miyajima N."/>
            <person name="Hirosawa M."/>
            <person name="Sugiura M."/>
            <person name="Sasamoto S."/>
            <person name="Kimura T."/>
            <person name="Hosouchi T."/>
            <person name="Matsuno A."/>
            <person name="Muraki A."/>
            <person name="Nakazaki N."/>
            <person name="Naruo K."/>
            <person name="Okumura S."/>
            <person name="Shimpo S."/>
            <person name="Takeuchi C."/>
            <person name="Wada T."/>
            <person name="Watanabe A."/>
            <person name="Yamada M."/>
            <person name="Yasuda M."/>
            <person name="Tabata S."/>
        </authorList>
    </citation>
    <scope>NUCLEOTIDE SEQUENCE [LARGE SCALE GENOMIC DNA]</scope>
    <source>
        <strain>ATCC 27184 / PCC 6803 / Kazusa</strain>
    </source>
</reference>
<proteinExistence type="inferred from homology"/>
<feature type="chain" id="PRO_0000147289" description="Probable dihydroorotase-like protein">
    <location>
        <begin position="1"/>
        <end position="441"/>
    </location>
</feature>
<feature type="region of interest" description="Disordered" evidence="2">
    <location>
        <begin position="121"/>
        <end position="140"/>
    </location>
</feature>
<name>PYRX_SYNY3</name>
<accession>P72934</accession>
<comment type="function">
    <text evidence="1">Non-functional DHOase.</text>
</comment>
<comment type="similarity">
    <text evidence="3">Belongs to the metallo-dependent hydrolases superfamily. DHOase family. PyrC' subfamily.</text>
</comment>
<sequence length="441" mass="48175">METQCRPQVRCLDPIQGKETRVTVIVRGRAIVAVEDDSYPIPADAAVIPGENLLLAPSLADLYSYSGEPGYEDRETLSQLVKTAIAGGFGDVAILPNTDPPLDQPQTLQWLKQRLNQIEGVNAHHQPPGDPQAENRPDSAPVQCHWWGSVTQGNQGKQLTEWGELDQAGVIGFSDGGAIQDWRLLQRALEYGAIAGKPLALVPLNLSLRGNGVMREGPLAIQLGLPPDPVMSEAAVIASLLELLPHYGTPVHFMRISTARGVELIVQAKSQGLNCTASVNWHHLLLSNEAIAHGLPPHTPHYDPNLRFDPPLGNEGDRLALIEGVKSGVIDAIAVDHQAFTYEEKTQTFAETPPGAIGYELVLPCLWQGLVEKNLITPMALWRALSTNPRRCLGLPEVSNSRILFDPDQAWTLKRGTLQTSAYNSPWWNHSLKGRVVAWES</sequence>
<protein>
    <recommendedName>
        <fullName>Probable dihydroorotase-like protein</fullName>
    </recommendedName>
    <alternativeName>
        <fullName>Aspartate carbamoyltransferase 42 kDa non-catalytic chain</fullName>
    </alternativeName>
</protein>